<organism>
    <name type="scientific">Polaromonas naphthalenivorans (strain CJ2)</name>
    <dbReference type="NCBI Taxonomy" id="365044"/>
    <lineage>
        <taxon>Bacteria</taxon>
        <taxon>Pseudomonadati</taxon>
        <taxon>Pseudomonadota</taxon>
        <taxon>Betaproteobacteria</taxon>
        <taxon>Burkholderiales</taxon>
        <taxon>Comamonadaceae</taxon>
        <taxon>Polaromonas</taxon>
    </lineage>
</organism>
<evidence type="ECO:0000255" key="1">
    <source>
        <dbReference type="HAMAP-Rule" id="MF_00374"/>
    </source>
</evidence>
<evidence type="ECO:0000305" key="2"/>
<proteinExistence type="inferred from homology"/>
<gene>
    <name evidence="1" type="primary">rpmC</name>
    <name type="ordered locus">Pnap_0211</name>
</gene>
<keyword id="KW-1185">Reference proteome</keyword>
<keyword id="KW-0687">Ribonucleoprotein</keyword>
<keyword id="KW-0689">Ribosomal protein</keyword>
<name>RL29_POLNA</name>
<dbReference type="EMBL" id="CP000529">
    <property type="protein sequence ID" value="ABM35536.1"/>
    <property type="molecule type" value="Genomic_DNA"/>
</dbReference>
<dbReference type="RefSeq" id="WP_011799644.1">
    <property type="nucleotide sequence ID" value="NC_008781.1"/>
</dbReference>
<dbReference type="SMR" id="A1VIQ8"/>
<dbReference type="STRING" id="365044.Pnap_0211"/>
<dbReference type="KEGG" id="pna:Pnap_0211"/>
<dbReference type="eggNOG" id="COG0255">
    <property type="taxonomic scope" value="Bacteria"/>
</dbReference>
<dbReference type="HOGENOM" id="CLU_158491_1_1_4"/>
<dbReference type="OrthoDB" id="9815192at2"/>
<dbReference type="Proteomes" id="UP000000644">
    <property type="component" value="Chromosome"/>
</dbReference>
<dbReference type="GO" id="GO:0022625">
    <property type="term" value="C:cytosolic large ribosomal subunit"/>
    <property type="evidence" value="ECO:0007669"/>
    <property type="project" value="TreeGrafter"/>
</dbReference>
<dbReference type="GO" id="GO:0003735">
    <property type="term" value="F:structural constituent of ribosome"/>
    <property type="evidence" value="ECO:0007669"/>
    <property type="project" value="InterPro"/>
</dbReference>
<dbReference type="GO" id="GO:0006412">
    <property type="term" value="P:translation"/>
    <property type="evidence" value="ECO:0007669"/>
    <property type="project" value="UniProtKB-UniRule"/>
</dbReference>
<dbReference type="CDD" id="cd00427">
    <property type="entry name" value="Ribosomal_L29_HIP"/>
    <property type="match status" value="1"/>
</dbReference>
<dbReference type="FunFam" id="1.10.287.310:FF:000001">
    <property type="entry name" value="50S ribosomal protein L29"/>
    <property type="match status" value="1"/>
</dbReference>
<dbReference type="Gene3D" id="1.10.287.310">
    <property type="match status" value="1"/>
</dbReference>
<dbReference type="HAMAP" id="MF_00374">
    <property type="entry name" value="Ribosomal_uL29"/>
    <property type="match status" value="1"/>
</dbReference>
<dbReference type="InterPro" id="IPR050063">
    <property type="entry name" value="Ribosomal_protein_uL29"/>
</dbReference>
<dbReference type="InterPro" id="IPR001854">
    <property type="entry name" value="Ribosomal_uL29"/>
</dbReference>
<dbReference type="InterPro" id="IPR018254">
    <property type="entry name" value="Ribosomal_uL29_CS"/>
</dbReference>
<dbReference type="InterPro" id="IPR036049">
    <property type="entry name" value="Ribosomal_uL29_sf"/>
</dbReference>
<dbReference type="NCBIfam" id="TIGR00012">
    <property type="entry name" value="L29"/>
    <property type="match status" value="1"/>
</dbReference>
<dbReference type="PANTHER" id="PTHR10916">
    <property type="entry name" value="60S RIBOSOMAL PROTEIN L35/50S RIBOSOMAL PROTEIN L29"/>
    <property type="match status" value="1"/>
</dbReference>
<dbReference type="PANTHER" id="PTHR10916:SF0">
    <property type="entry name" value="LARGE RIBOSOMAL SUBUNIT PROTEIN UL29C"/>
    <property type="match status" value="1"/>
</dbReference>
<dbReference type="Pfam" id="PF00831">
    <property type="entry name" value="Ribosomal_L29"/>
    <property type="match status" value="1"/>
</dbReference>
<dbReference type="SUPFAM" id="SSF46561">
    <property type="entry name" value="Ribosomal protein L29 (L29p)"/>
    <property type="match status" value="1"/>
</dbReference>
<dbReference type="PROSITE" id="PS00579">
    <property type="entry name" value="RIBOSOMAL_L29"/>
    <property type="match status" value="1"/>
</dbReference>
<protein>
    <recommendedName>
        <fullName evidence="1">Large ribosomal subunit protein uL29</fullName>
    </recommendedName>
    <alternativeName>
        <fullName evidence="2">50S ribosomal protein L29</fullName>
    </alternativeName>
</protein>
<accession>A1VIQ8</accession>
<sequence>MNTTELRQKDVDGLKAEVKELQKAHFGLRMQKATQQLTNTSTLRSTRRAIARAKTILAETIVKQGAK</sequence>
<feature type="chain" id="PRO_1000007549" description="Large ribosomal subunit protein uL29">
    <location>
        <begin position="1"/>
        <end position="67"/>
    </location>
</feature>
<reference key="1">
    <citation type="journal article" date="2009" name="Environ. Microbiol.">
        <title>The genome of Polaromonas naphthalenivorans strain CJ2, isolated from coal tar-contaminated sediment, reveals physiological and metabolic versatility and evolution through extensive horizontal gene transfer.</title>
        <authorList>
            <person name="Yagi J.M."/>
            <person name="Sims D."/>
            <person name="Brettin T."/>
            <person name="Bruce D."/>
            <person name="Madsen E.L."/>
        </authorList>
    </citation>
    <scope>NUCLEOTIDE SEQUENCE [LARGE SCALE GENOMIC DNA]</scope>
    <source>
        <strain>CJ2</strain>
    </source>
</reference>
<comment type="similarity">
    <text evidence="1">Belongs to the universal ribosomal protein uL29 family.</text>
</comment>